<feature type="signal peptide" evidence="1">
    <location>
        <begin position="1" status="less than"/>
        <end position="21"/>
    </location>
</feature>
<feature type="chain" id="PRO_0000004880" description="Cecropin-B">
    <location>
        <begin position="22"/>
        <end position="58"/>
    </location>
</feature>
<feature type="non-terminal residue">
    <location>
        <position position="1"/>
    </location>
</feature>
<name>CECB_SPOLT</name>
<comment type="function">
    <text evidence="1">Cecropins have lytic and antibacterial activity against several Gram-positive and Gram-negative bacteria.</text>
</comment>
<comment type="subcellular location">
    <subcellularLocation>
        <location evidence="1">Secreted</location>
    </subcellularLocation>
</comment>
<comment type="induction">
    <text evidence="1">Induced as part of the humoral response to a bacterial invasion. Transcripts appear within the immunized fat body.</text>
</comment>
<comment type="similarity">
    <text evidence="2">Belongs to the cecropin family.</text>
</comment>
<protein>
    <recommendedName>
        <fullName>Cecropin-B</fullName>
    </recommendedName>
</protein>
<evidence type="ECO:0000269" key="1">
    <source>
    </source>
</evidence>
<evidence type="ECO:0000305" key="2"/>
<gene>
    <name type="primary">CECB</name>
</gene>
<proteinExistence type="evidence at protein level"/>
<organism>
    <name type="scientific">Spodoptera litura</name>
    <name type="common">Asian cotton leafworm</name>
    <dbReference type="NCBI Taxonomy" id="69820"/>
    <lineage>
        <taxon>Eukaryota</taxon>
        <taxon>Metazoa</taxon>
        <taxon>Ecdysozoa</taxon>
        <taxon>Arthropoda</taxon>
        <taxon>Hexapoda</taxon>
        <taxon>Insecta</taxon>
        <taxon>Pterygota</taxon>
        <taxon>Neoptera</taxon>
        <taxon>Endopterygota</taxon>
        <taxon>Lepidoptera</taxon>
        <taxon>Glossata</taxon>
        <taxon>Ditrysia</taxon>
        <taxon>Noctuoidea</taxon>
        <taxon>Noctuidae</taxon>
        <taxon>Amphipyrinae</taxon>
        <taxon>Spodoptera</taxon>
    </lineage>
</organism>
<reference key="1">
    <citation type="journal article" date="2000" name="Comp. Biochem. Physiol.">
        <title>Antibacterial properties and partial cDNA sequences of cecropin-like antibacterial peptides from the common cutworm, Spodoptera litura.</title>
        <authorList>
            <person name="Choi C.S."/>
            <person name="Lee I.H."/>
            <person name="Kim E."/>
            <person name="Kim S.I."/>
            <person name="Kim H.R."/>
        </authorList>
    </citation>
    <scope>NUCLEOTIDE SEQUENCE [MRNA]</scope>
    <scope>PROTEIN SEQUENCE OF N-TERMINUS</scope>
    <scope>FUNCTION</scope>
    <scope>SUBCELLULAR LOCATION</scope>
    <scope>INDUCTION</scope>
    <source>
        <tissue>Larval hemolymph</tissue>
    </source>
</reference>
<accession>Q9XZH0</accession>
<sequence>ILSFVFACLLALSAVSAAPEPRWKVFKKIEKMGRNIRDGIVKAGPAIEVLGSAKALGK</sequence>
<dbReference type="EMBL" id="AF142342">
    <property type="protein sequence ID" value="AAD29439.1"/>
    <property type="molecule type" value="mRNA"/>
</dbReference>
<dbReference type="SMR" id="Q9XZH0"/>
<dbReference type="Proteomes" id="UP000301870">
    <property type="component" value="Unplaced"/>
</dbReference>
<dbReference type="GO" id="GO:0005576">
    <property type="term" value="C:extracellular region"/>
    <property type="evidence" value="ECO:0007669"/>
    <property type="project" value="UniProtKB-SubCell"/>
</dbReference>
<dbReference type="GO" id="GO:0019731">
    <property type="term" value="P:antibacterial humoral response"/>
    <property type="evidence" value="ECO:0007669"/>
    <property type="project" value="InterPro"/>
</dbReference>
<dbReference type="GO" id="GO:0050830">
    <property type="term" value="P:defense response to Gram-positive bacterium"/>
    <property type="evidence" value="ECO:0007669"/>
    <property type="project" value="UniProtKB-ARBA"/>
</dbReference>
<dbReference type="GO" id="GO:0045087">
    <property type="term" value="P:innate immune response"/>
    <property type="evidence" value="ECO:0007669"/>
    <property type="project" value="UniProtKB-KW"/>
</dbReference>
<dbReference type="InterPro" id="IPR000875">
    <property type="entry name" value="Cecropin"/>
</dbReference>
<dbReference type="Pfam" id="PF00272">
    <property type="entry name" value="Cecropin"/>
    <property type="match status" value="1"/>
</dbReference>
<dbReference type="PROSITE" id="PS00268">
    <property type="entry name" value="CECROPIN"/>
    <property type="match status" value="1"/>
</dbReference>
<keyword id="KW-0044">Antibiotic</keyword>
<keyword id="KW-0929">Antimicrobial</keyword>
<keyword id="KW-0903">Direct protein sequencing</keyword>
<keyword id="KW-0391">Immunity</keyword>
<keyword id="KW-0399">Innate immunity</keyword>
<keyword id="KW-1185">Reference proteome</keyword>
<keyword id="KW-0964">Secreted</keyword>
<keyword id="KW-0732">Signal</keyword>